<gene>
    <name type="primary">PAP18</name>
    <name type="synonym">PAP30</name>
    <name type="ordered locus">At3g20500</name>
    <name type="ORF">K10D20.4</name>
</gene>
<organism>
    <name type="scientific">Arabidopsis thaliana</name>
    <name type="common">Mouse-ear cress</name>
    <dbReference type="NCBI Taxonomy" id="3702"/>
    <lineage>
        <taxon>Eukaryota</taxon>
        <taxon>Viridiplantae</taxon>
        <taxon>Streptophyta</taxon>
        <taxon>Embryophyta</taxon>
        <taxon>Tracheophyta</taxon>
        <taxon>Spermatophyta</taxon>
        <taxon>Magnoliopsida</taxon>
        <taxon>eudicotyledons</taxon>
        <taxon>Gunneridae</taxon>
        <taxon>Pentapetalae</taxon>
        <taxon>rosids</taxon>
        <taxon>malvids</taxon>
        <taxon>Brassicales</taxon>
        <taxon>Brassicaceae</taxon>
        <taxon>Camelineae</taxon>
        <taxon>Arabidopsis</taxon>
    </lineage>
</organism>
<feature type="signal peptide" evidence="2">
    <location>
        <begin position="1"/>
        <end position="23"/>
    </location>
</feature>
<feature type="chain" id="PRO_0000372821" description="Purple acid phosphatase 18">
    <location>
        <begin position="24"/>
        <end position="437"/>
    </location>
</feature>
<feature type="active site" description="Proton donor" evidence="1">
    <location>
        <position position="301"/>
    </location>
</feature>
<feature type="binding site" evidence="1">
    <location>
        <position position="148"/>
    </location>
    <ligand>
        <name>Fe cation</name>
        <dbReference type="ChEBI" id="CHEBI:24875"/>
    </ligand>
</feature>
<feature type="binding site" evidence="1">
    <location>
        <position position="175"/>
    </location>
    <ligand>
        <name>Fe cation</name>
        <dbReference type="ChEBI" id="CHEBI:24875"/>
    </ligand>
</feature>
<feature type="binding site" evidence="1">
    <location>
        <position position="175"/>
    </location>
    <ligand>
        <name>Zn(2+)</name>
        <dbReference type="ChEBI" id="CHEBI:29105"/>
    </ligand>
</feature>
<feature type="binding site" evidence="1">
    <location>
        <position position="178"/>
    </location>
    <ligand>
        <name>Fe cation</name>
        <dbReference type="ChEBI" id="CHEBI:24875"/>
    </ligand>
</feature>
<feature type="binding site" evidence="1">
    <location>
        <position position="208"/>
    </location>
    <ligand>
        <name>substrate</name>
    </ligand>
</feature>
<feature type="binding site" evidence="1">
    <location>
        <position position="208"/>
    </location>
    <ligand>
        <name>Zn(2+)</name>
        <dbReference type="ChEBI" id="CHEBI:29105"/>
    </ligand>
</feature>
<feature type="binding site" evidence="1">
    <location>
        <position position="291"/>
    </location>
    <ligand>
        <name>Zn(2+)</name>
        <dbReference type="ChEBI" id="CHEBI:29105"/>
    </ligand>
</feature>
<feature type="binding site" evidence="1">
    <location>
        <begin position="328"/>
        <end position="330"/>
    </location>
    <ligand>
        <name>substrate</name>
    </ligand>
</feature>
<feature type="binding site" evidence="1">
    <location>
        <position position="328"/>
    </location>
    <ligand>
        <name>Zn(2+)</name>
        <dbReference type="ChEBI" id="CHEBI:29105"/>
    </ligand>
</feature>
<feature type="binding site" evidence="1">
    <location>
        <position position="330"/>
    </location>
    <ligand>
        <name>Fe cation</name>
        <dbReference type="ChEBI" id="CHEBI:24875"/>
    </ligand>
</feature>
<feature type="glycosylation site" description="N-linked (GlcNAc...) asparagine" evidence="2">
    <location>
        <position position="390"/>
    </location>
</feature>
<feature type="sequence conflict" description="In Ref. 5; AAP81215." evidence="4" ref="5">
    <original>E</original>
    <variation>A</variation>
    <location>
        <position position="212"/>
    </location>
</feature>
<feature type="sequence conflict" description="In Ref. 1; AAN74649." evidence="4" ref="1">
    <original>Y</original>
    <variation>N</variation>
    <location>
        <position position="242"/>
    </location>
</feature>
<feature type="sequence conflict" description="In Ref. 1; AAN74649." evidence="4" ref="1">
    <original>L</original>
    <variation>I</variation>
    <location>
        <position position="395"/>
    </location>
</feature>
<evidence type="ECO:0000250" key="1"/>
<evidence type="ECO:0000255" key="2"/>
<evidence type="ECO:0000269" key="3">
    <source>
    </source>
</evidence>
<evidence type="ECO:0000305" key="4"/>
<dbReference type="EC" id="3.1.3.2"/>
<dbReference type="EMBL" id="AF448725">
    <property type="protein sequence ID" value="AAN74649.1"/>
    <property type="molecule type" value="mRNA"/>
</dbReference>
<dbReference type="EMBL" id="AP000410">
    <property type="protein sequence ID" value="BAB01159.1"/>
    <property type="molecule type" value="Genomic_DNA"/>
</dbReference>
<dbReference type="EMBL" id="CP002686">
    <property type="protein sequence ID" value="AEE76388.1"/>
    <property type="molecule type" value="Genomic_DNA"/>
</dbReference>
<dbReference type="EMBL" id="AY062488">
    <property type="protein sequence ID" value="AAL32566.1"/>
    <property type="molecule type" value="mRNA"/>
</dbReference>
<dbReference type="EMBL" id="AY093272">
    <property type="protein sequence ID" value="AAM13271.1"/>
    <property type="molecule type" value="mRNA"/>
</dbReference>
<dbReference type="EMBL" id="AY297742">
    <property type="protein sequence ID" value="AAP81215.1"/>
    <property type="molecule type" value="mRNA"/>
</dbReference>
<dbReference type="RefSeq" id="NP_188686.2">
    <property type="nucleotide sequence ID" value="NM_112942.5"/>
</dbReference>
<dbReference type="SMR" id="Q9LJU7"/>
<dbReference type="FunCoup" id="Q9LJU7">
    <property type="interactions" value="490"/>
</dbReference>
<dbReference type="STRING" id="3702.Q9LJU7"/>
<dbReference type="GlyCosmos" id="Q9LJU7">
    <property type="glycosylation" value="1 site, No reported glycans"/>
</dbReference>
<dbReference type="GlyGen" id="Q9LJU7">
    <property type="glycosylation" value="1 site"/>
</dbReference>
<dbReference type="iPTMnet" id="Q9LJU7"/>
<dbReference type="PaxDb" id="3702-AT3G20500.1"/>
<dbReference type="ProteomicsDB" id="249018"/>
<dbReference type="EnsemblPlants" id="AT3G20500.1">
    <property type="protein sequence ID" value="AT3G20500.1"/>
    <property type="gene ID" value="AT3G20500"/>
</dbReference>
<dbReference type="GeneID" id="821596"/>
<dbReference type="Gramene" id="AT3G20500.1">
    <property type="protein sequence ID" value="AT3G20500.1"/>
    <property type="gene ID" value="AT3G20500"/>
</dbReference>
<dbReference type="KEGG" id="ath:AT3G20500"/>
<dbReference type="Araport" id="AT3G20500"/>
<dbReference type="TAIR" id="AT3G20500">
    <property type="gene designation" value="PAP18"/>
</dbReference>
<dbReference type="eggNOG" id="KOG1378">
    <property type="taxonomic scope" value="Eukaryota"/>
</dbReference>
<dbReference type="HOGENOM" id="CLU_013387_0_0_1"/>
<dbReference type="InParanoid" id="Q9LJU7"/>
<dbReference type="OMA" id="FTEFMHR"/>
<dbReference type="OrthoDB" id="45007at2759"/>
<dbReference type="PhylomeDB" id="Q9LJU7"/>
<dbReference type="BioCyc" id="ARA:AT3G20500-MONOMER"/>
<dbReference type="PRO" id="PR:Q9LJU7"/>
<dbReference type="Proteomes" id="UP000006548">
    <property type="component" value="Chromosome 3"/>
</dbReference>
<dbReference type="ExpressionAtlas" id="Q9LJU7">
    <property type="expression patterns" value="baseline and differential"/>
</dbReference>
<dbReference type="GO" id="GO:0005576">
    <property type="term" value="C:extracellular region"/>
    <property type="evidence" value="ECO:0007669"/>
    <property type="project" value="UniProtKB-SubCell"/>
</dbReference>
<dbReference type="GO" id="GO:0003993">
    <property type="term" value="F:acid phosphatase activity"/>
    <property type="evidence" value="ECO:0000250"/>
    <property type="project" value="TAIR"/>
</dbReference>
<dbReference type="GO" id="GO:0046872">
    <property type="term" value="F:metal ion binding"/>
    <property type="evidence" value="ECO:0007669"/>
    <property type="project" value="UniProtKB-KW"/>
</dbReference>
<dbReference type="CDD" id="cd00839">
    <property type="entry name" value="MPP_PAPs"/>
    <property type="match status" value="1"/>
</dbReference>
<dbReference type="FunFam" id="2.60.40.380:FF:000001">
    <property type="entry name" value="Fe(3+)-Zn(2+) purple acid phosphatase"/>
    <property type="match status" value="1"/>
</dbReference>
<dbReference type="FunFam" id="3.60.21.10:FF:000034">
    <property type="entry name" value="Fe(3+)-Zn(2+) purple acid phosphatase"/>
    <property type="match status" value="1"/>
</dbReference>
<dbReference type="Gene3D" id="3.60.21.10">
    <property type="match status" value="1"/>
</dbReference>
<dbReference type="Gene3D" id="2.60.40.380">
    <property type="entry name" value="Purple acid phosphatase-like, N-terminal"/>
    <property type="match status" value="1"/>
</dbReference>
<dbReference type="InterPro" id="IPR004843">
    <property type="entry name" value="Calcineurin-like_PHP_ApaH"/>
</dbReference>
<dbReference type="InterPro" id="IPR029052">
    <property type="entry name" value="Metallo-depent_PP-like"/>
</dbReference>
<dbReference type="InterPro" id="IPR041792">
    <property type="entry name" value="MPP_PAP"/>
</dbReference>
<dbReference type="InterPro" id="IPR039331">
    <property type="entry name" value="PPA-like"/>
</dbReference>
<dbReference type="InterPro" id="IPR008963">
    <property type="entry name" value="Purple_acid_Pase-like_N"/>
</dbReference>
<dbReference type="InterPro" id="IPR015914">
    <property type="entry name" value="Purple_acid_Pase_N"/>
</dbReference>
<dbReference type="InterPro" id="IPR025733">
    <property type="entry name" value="Purple_acid_PPase_C_dom"/>
</dbReference>
<dbReference type="PANTHER" id="PTHR22953">
    <property type="entry name" value="ACID PHOSPHATASE RELATED"/>
    <property type="match status" value="1"/>
</dbReference>
<dbReference type="PANTHER" id="PTHR22953:SF155">
    <property type="entry name" value="PURPLE ACID PHOSPHATASE 18"/>
    <property type="match status" value="1"/>
</dbReference>
<dbReference type="Pfam" id="PF00149">
    <property type="entry name" value="Metallophos"/>
    <property type="match status" value="1"/>
</dbReference>
<dbReference type="Pfam" id="PF14008">
    <property type="entry name" value="Metallophos_C"/>
    <property type="match status" value="1"/>
</dbReference>
<dbReference type="Pfam" id="PF16656">
    <property type="entry name" value="Pur_ac_phosph_N"/>
    <property type="match status" value="1"/>
</dbReference>
<dbReference type="SUPFAM" id="SSF56300">
    <property type="entry name" value="Metallo-dependent phosphatases"/>
    <property type="match status" value="1"/>
</dbReference>
<dbReference type="SUPFAM" id="SSF49363">
    <property type="entry name" value="Purple acid phosphatase, N-terminal domain"/>
    <property type="match status" value="1"/>
</dbReference>
<accession>Q9LJU7</accession>
<accession>Q7XY13</accession>
<accession>Q8H6W7</accession>
<comment type="catalytic activity">
    <reaction>
        <text>a phosphate monoester + H2O = an alcohol + phosphate</text>
        <dbReference type="Rhea" id="RHEA:15017"/>
        <dbReference type="ChEBI" id="CHEBI:15377"/>
        <dbReference type="ChEBI" id="CHEBI:30879"/>
        <dbReference type="ChEBI" id="CHEBI:43474"/>
        <dbReference type="ChEBI" id="CHEBI:67140"/>
        <dbReference type="EC" id="3.1.3.2"/>
    </reaction>
</comment>
<comment type="cofactor">
    <cofactor evidence="1">
        <name>Fe cation</name>
        <dbReference type="ChEBI" id="CHEBI:24875"/>
    </cofactor>
    <text evidence="1">Binds 1 Fe cation per subunit.</text>
</comment>
<comment type="cofactor">
    <cofactor evidence="1">
        <name>Zn(2+)</name>
        <dbReference type="ChEBI" id="CHEBI:29105"/>
    </cofactor>
    <text evidence="1">Binds 1 zinc ion per subunit.</text>
</comment>
<comment type="subunit">
    <text evidence="1">Homodimer.</text>
</comment>
<comment type="subcellular location">
    <subcellularLocation>
        <location evidence="1">Secreted</location>
    </subcellularLocation>
</comment>
<comment type="tissue specificity">
    <text evidence="3">Expressed in roots, stems, leaves, flowers and siliques.</text>
</comment>
<comment type="similarity">
    <text evidence="4">Belongs to the metallophosphoesterase superfamily. Purple acid phosphatase family.</text>
</comment>
<proteinExistence type="evidence at transcript level"/>
<reference key="1">
    <citation type="journal article" date="2005" name="Plant Mol. Biol.">
        <title>Expression patterns of purple acid phosphatase genes in Arabidopsis organs and functional analysis of AtPAP23 predominantly transcribed in flower.</title>
        <authorList>
            <person name="Zhu H."/>
            <person name="Qian W."/>
            <person name="Lu X."/>
            <person name="Li D."/>
            <person name="Liu X."/>
            <person name="Liu K."/>
            <person name="Wang D."/>
        </authorList>
    </citation>
    <scope>NUCLEOTIDE SEQUENCE [MRNA]</scope>
    <scope>TISSUE SPECIFICITY</scope>
    <source>
        <strain>cv. Columbia</strain>
    </source>
</reference>
<reference key="2">
    <citation type="journal article" date="2000" name="DNA Res.">
        <title>Structural analysis of Arabidopsis thaliana chromosome 3. II. Sequence features of the 4,251,695 bp regions covered by 90 P1, TAC and BAC clones.</title>
        <authorList>
            <person name="Kaneko T."/>
            <person name="Katoh T."/>
            <person name="Sato S."/>
            <person name="Nakamura Y."/>
            <person name="Asamizu E."/>
            <person name="Tabata S."/>
        </authorList>
    </citation>
    <scope>NUCLEOTIDE SEQUENCE [LARGE SCALE GENOMIC DNA]</scope>
    <source>
        <strain>cv. Columbia</strain>
    </source>
</reference>
<reference key="3">
    <citation type="journal article" date="2017" name="Plant J.">
        <title>Araport11: a complete reannotation of the Arabidopsis thaliana reference genome.</title>
        <authorList>
            <person name="Cheng C.Y."/>
            <person name="Krishnakumar V."/>
            <person name="Chan A.P."/>
            <person name="Thibaud-Nissen F."/>
            <person name="Schobel S."/>
            <person name="Town C.D."/>
        </authorList>
    </citation>
    <scope>GENOME REANNOTATION</scope>
    <source>
        <strain>cv. Columbia</strain>
    </source>
</reference>
<reference key="4">
    <citation type="journal article" date="2003" name="Science">
        <title>Empirical analysis of transcriptional activity in the Arabidopsis genome.</title>
        <authorList>
            <person name="Yamada K."/>
            <person name="Lim J."/>
            <person name="Dale J.M."/>
            <person name="Chen H."/>
            <person name="Shinn P."/>
            <person name="Palm C.J."/>
            <person name="Southwick A.M."/>
            <person name="Wu H.C."/>
            <person name="Kim C.J."/>
            <person name="Nguyen M."/>
            <person name="Pham P.K."/>
            <person name="Cheuk R.F."/>
            <person name="Karlin-Newmann G."/>
            <person name="Liu S.X."/>
            <person name="Lam B."/>
            <person name="Sakano H."/>
            <person name="Wu T."/>
            <person name="Yu G."/>
            <person name="Miranda M."/>
            <person name="Quach H.L."/>
            <person name="Tripp M."/>
            <person name="Chang C.H."/>
            <person name="Lee J.M."/>
            <person name="Toriumi M.J."/>
            <person name="Chan M.M."/>
            <person name="Tang C.C."/>
            <person name="Onodera C.S."/>
            <person name="Deng J.M."/>
            <person name="Akiyama K."/>
            <person name="Ansari Y."/>
            <person name="Arakawa T."/>
            <person name="Banh J."/>
            <person name="Banno F."/>
            <person name="Bowser L."/>
            <person name="Brooks S.Y."/>
            <person name="Carninci P."/>
            <person name="Chao Q."/>
            <person name="Choy N."/>
            <person name="Enju A."/>
            <person name="Goldsmith A.D."/>
            <person name="Gurjal M."/>
            <person name="Hansen N.F."/>
            <person name="Hayashizaki Y."/>
            <person name="Johnson-Hopson C."/>
            <person name="Hsuan V.W."/>
            <person name="Iida K."/>
            <person name="Karnes M."/>
            <person name="Khan S."/>
            <person name="Koesema E."/>
            <person name="Ishida J."/>
            <person name="Jiang P.X."/>
            <person name="Jones T."/>
            <person name="Kawai J."/>
            <person name="Kamiya A."/>
            <person name="Meyers C."/>
            <person name="Nakajima M."/>
            <person name="Narusaka M."/>
            <person name="Seki M."/>
            <person name="Sakurai T."/>
            <person name="Satou M."/>
            <person name="Tamse R."/>
            <person name="Vaysberg M."/>
            <person name="Wallender E.K."/>
            <person name="Wong C."/>
            <person name="Yamamura Y."/>
            <person name="Yuan S."/>
            <person name="Shinozaki K."/>
            <person name="Davis R.W."/>
            <person name="Theologis A."/>
            <person name="Ecker J.R."/>
        </authorList>
    </citation>
    <scope>NUCLEOTIDE SEQUENCE [LARGE SCALE MRNA]</scope>
    <source>
        <strain>cv. Columbia</strain>
    </source>
</reference>
<reference key="5">
    <citation type="submission" date="2003-05" db="EMBL/GenBank/DDBJ databases">
        <title>Identification of differentially displayed Arabidopsis thaliana acid phosphatase-encoding genes.</title>
        <authorList>
            <person name="Lohrasebi T."/>
            <person name="Malboobi M.A."/>
        </authorList>
    </citation>
    <scope>NUCLEOTIDE SEQUENCE [MRNA] OF 212-332</scope>
    <source>
        <tissue>Seedling</tissue>
    </source>
</reference>
<reference key="6">
    <citation type="journal article" date="2002" name="J. Biol. Chem.">
        <title>Purple acid phosphatases of Arabidopsis thaliana. Comparative analysis and differential regulation by phosphate deprivation.</title>
        <authorList>
            <person name="Li D."/>
            <person name="Zhu H."/>
            <person name="Liu K."/>
            <person name="Liu X."/>
            <person name="Leggewie G."/>
            <person name="Udvardi M."/>
            <person name="Wang D."/>
        </authorList>
    </citation>
    <scope>GENE FAMILY</scope>
    <scope>NOMENCLATURE</scope>
</reference>
<name>PPA18_ARATH</name>
<sequence length="437" mass="49870">MEKWGILLLVTLSVSIIFTSAAADDYVRPKPRETLQFPWKQKSSSVPEQVHISLAGDKHMRVTWVTNDKSSPSFVEYGTSPGKYSYLGQGESTSYSYIMYRSGKIHHTVIGPLEADTVYYYRCGGEGPEFHLKTPPAQFPITFAVAGDLGQTGWTKSTLDHIDQCKYAVHLLPGDLSYADYMQHKWDTFGELVQPLASVRPWMVTQGNHEKESIPFIVDEFVSFNSRWKMPYEESGSNSNLYYSFEVAGVHAIMLGSYTDYDRYSDQYSWLKADLSKVDRERTPWLIVLFHVPWYNSNNAHQHEGDEMMAEMEPLLYASGVDIVFTGHVHAYERTKRVNNGKSDPCGPVHITIGDGGNREGLARKYKDPSPEWSVFREASFGHGELQMVNSTHALWTWHRNDDDEPTRSDEVWLNSLVNSGCLKKRPQELRKMLLEP</sequence>
<protein>
    <recommendedName>
        <fullName>Purple acid phosphatase 18</fullName>
        <ecNumber>3.1.3.2</ecNumber>
    </recommendedName>
</protein>
<keyword id="KW-0325">Glycoprotein</keyword>
<keyword id="KW-0378">Hydrolase</keyword>
<keyword id="KW-0408">Iron</keyword>
<keyword id="KW-0479">Metal-binding</keyword>
<keyword id="KW-1185">Reference proteome</keyword>
<keyword id="KW-0964">Secreted</keyword>
<keyword id="KW-0732">Signal</keyword>
<keyword id="KW-0862">Zinc</keyword>